<reference key="1">
    <citation type="submission" date="2007-11" db="EMBL/GenBank/DDBJ databases">
        <title>Complete genome sequence of Clostridium phytofermentans ISDg.</title>
        <authorList>
            <person name="Leschine S.B."/>
            <person name="Warnick T.A."/>
            <person name="Blanchard J.L."/>
            <person name="Schnell D.J."/>
            <person name="Petit E.L."/>
            <person name="LaTouf W.G."/>
            <person name="Copeland A."/>
            <person name="Lucas S."/>
            <person name="Lapidus A."/>
            <person name="Barry K."/>
            <person name="Glavina del Rio T."/>
            <person name="Dalin E."/>
            <person name="Tice H."/>
            <person name="Pitluck S."/>
            <person name="Kiss H."/>
            <person name="Brettin T."/>
            <person name="Bruce D."/>
            <person name="Detter J.C."/>
            <person name="Han C."/>
            <person name="Kuske C."/>
            <person name="Schmutz J."/>
            <person name="Larimer F."/>
            <person name="Land M."/>
            <person name="Hauser L."/>
            <person name="Kyrpides N."/>
            <person name="Kim E.A."/>
            <person name="Richardson P."/>
        </authorList>
    </citation>
    <scope>NUCLEOTIDE SEQUENCE [LARGE SCALE GENOMIC DNA]</scope>
    <source>
        <strain>ATCC 700394 / DSM 18823 / ISDg</strain>
    </source>
</reference>
<keyword id="KW-0143">Chaperone</keyword>
<keyword id="KW-0963">Cytoplasm</keyword>
<keyword id="KW-0996">Nickel insertion</keyword>
<keyword id="KW-1185">Reference proteome</keyword>
<name>UREF_LACP7</name>
<dbReference type="EMBL" id="CP000885">
    <property type="protein sequence ID" value="ABX41072.1"/>
    <property type="molecule type" value="Genomic_DNA"/>
</dbReference>
<dbReference type="RefSeq" id="WP_012198715.1">
    <property type="nucleotide sequence ID" value="NC_010001.1"/>
</dbReference>
<dbReference type="SMR" id="A9KJR7"/>
<dbReference type="STRING" id="357809.Cphy_0685"/>
<dbReference type="KEGG" id="cpy:Cphy_0685"/>
<dbReference type="eggNOG" id="COG0830">
    <property type="taxonomic scope" value="Bacteria"/>
</dbReference>
<dbReference type="HOGENOM" id="CLU_049215_4_2_9"/>
<dbReference type="OrthoDB" id="9798772at2"/>
<dbReference type="Proteomes" id="UP000000370">
    <property type="component" value="Chromosome"/>
</dbReference>
<dbReference type="GO" id="GO:0005737">
    <property type="term" value="C:cytoplasm"/>
    <property type="evidence" value="ECO:0007669"/>
    <property type="project" value="UniProtKB-SubCell"/>
</dbReference>
<dbReference type="GO" id="GO:0016151">
    <property type="term" value="F:nickel cation binding"/>
    <property type="evidence" value="ECO:0007669"/>
    <property type="project" value="UniProtKB-UniRule"/>
</dbReference>
<dbReference type="Gene3D" id="1.10.4190.10">
    <property type="entry name" value="Urease accessory protein UreF"/>
    <property type="match status" value="1"/>
</dbReference>
<dbReference type="HAMAP" id="MF_01385">
    <property type="entry name" value="UreF"/>
    <property type="match status" value="1"/>
</dbReference>
<dbReference type="InterPro" id="IPR002639">
    <property type="entry name" value="UreF"/>
</dbReference>
<dbReference type="InterPro" id="IPR038277">
    <property type="entry name" value="UreF_sf"/>
</dbReference>
<dbReference type="PANTHER" id="PTHR33620">
    <property type="entry name" value="UREASE ACCESSORY PROTEIN F"/>
    <property type="match status" value="1"/>
</dbReference>
<dbReference type="PANTHER" id="PTHR33620:SF1">
    <property type="entry name" value="UREASE ACCESSORY PROTEIN F"/>
    <property type="match status" value="1"/>
</dbReference>
<dbReference type="Pfam" id="PF01730">
    <property type="entry name" value="UreF"/>
    <property type="match status" value="1"/>
</dbReference>
<dbReference type="PIRSF" id="PIRSF009467">
    <property type="entry name" value="Ureas_acces_UreF"/>
    <property type="match status" value="1"/>
</dbReference>
<organism>
    <name type="scientific">Lachnoclostridium phytofermentans (strain ATCC 700394 / DSM 18823 / ISDg)</name>
    <name type="common">Clostridium phytofermentans</name>
    <dbReference type="NCBI Taxonomy" id="357809"/>
    <lineage>
        <taxon>Bacteria</taxon>
        <taxon>Bacillati</taxon>
        <taxon>Bacillota</taxon>
        <taxon>Clostridia</taxon>
        <taxon>Lachnospirales</taxon>
        <taxon>Lachnospiraceae</taxon>
    </lineage>
</organism>
<accession>A9KJR7</accession>
<evidence type="ECO:0000255" key="1">
    <source>
        <dbReference type="HAMAP-Rule" id="MF_01385"/>
    </source>
</evidence>
<sequence>MDNYVLNLLQLCDSTFPTGAFSHSFGLETYIQDGIIFNKETFSKWNKAYIKEQLVYSDGLACRLAYEALENNDMDTIWMLDGMLRAQILARESREGSRIIGERLLTLGNQLYPSSRLTSYVDRIAKGVSYGHPAIAFALISHSLSIPKNTTVMSYLFSSNANLVQNAVRGIPLGQTQGQQLIKESQDFIADAWNLIETLTEDDFGITASGIEISQMRHEVLHIRIFMS</sequence>
<feature type="chain" id="PRO_0000344114" description="Urease accessory protein UreF">
    <location>
        <begin position="1"/>
        <end position="228"/>
    </location>
</feature>
<gene>
    <name evidence="1" type="primary">ureF</name>
    <name type="ordered locus">Cphy_0685</name>
</gene>
<comment type="function">
    <text evidence="1">Required for maturation of urease via the functional incorporation of the urease nickel metallocenter.</text>
</comment>
<comment type="subunit">
    <text evidence="1">UreD, UreF and UreG form a complex that acts as a GTP-hydrolysis-dependent molecular chaperone, activating the urease apoprotein by helping to assemble the nickel containing metallocenter of UreC. The UreE protein probably delivers the nickel.</text>
</comment>
<comment type="subcellular location">
    <subcellularLocation>
        <location evidence="1">Cytoplasm</location>
    </subcellularLocation>
</comment>
<comment type="similarity">
    <text evidence="1">Belongs to the UreF family.</text>
</comment>
<protein>
    <recommendedName>
        <fullName evidence="1">Urease accessory protein UreF</fullName>
    </recommendedName>
</protein>
<proteinExistence type="inferred from homology"/>